<dbReference type="EMBL" id="CP000446">
    <property type="protein sequence ID" value="ABI38109.1"/>
    <property type="molecule type" value="Genomic_DNA"/>
</dbReference>
<dbReference type="RefSeq" id="WP_011621820.1">
    <property type="nucleotide sequence ID" value="NC_008321.1"/>
</dbReference>
<dbReference type="SMR" id="Q0HLF8"/>
<dbReference type="GeneID" id="94727024"/>
<dbReference type="KEGG" id="she:Shewmr4_1029"/>
<dbReference type="HOGENOM" id="CLU_148518_0_0_6"/>
<dbReference type="GO" id="GO:0022627">
    <property type="term" value="C:cytosolic small ribosomal subunit"/>
    <property type="evidence" value="ECO:0007669"/>
    <property type="project" value="TreeGrafter"/>
</dbReference>
<dbReference type="GO" id="GO:0019843">
    <property type="term" value="F:rRNA binding"/>
    <property type="evidence" value="ECO:0007669"/>
    <property type="project" value="UniProtKB-UniRule"/>
</dbReference>
<dbReference type="GO" id="GO:0003735">
    <property type="term" value="F:structural constituent of ribosome"/>
    <property type="evidence" value="ECO:0007669"/>
    <property type="project" value="InterPro"/>
</dbReference>
<dbReference type="GO" id="GO:0006412">
    <property type="term" value="P:translation"/>
    <property type="evidence" value="ECO:0007669"/>
    <property type="project" value="UniProtKB-UniRule"/>
</dbReference>
<dbReference type="CDD" id="cd00353">
    <property type="entry name" value="Ribosomal_S15p_S13e"/>
    <property type="match status" value="1"/>
</dbReference>
<dbReference type="FunFam" id="1.10.287.10:FF:000002">
    <property type="entry name" value="30S ribosomal protein S15"/>
    <property type="match status" value="1"/>
</dbReference>
<dbReference type="Gene3D" id="6.10.250.3130">
    <property type="match status" value="1"/>
</dbReference>
<dbReference type="Gene3D" id="1.10.287.10">
    <property type="entry name" value="S15/NS1, RNA-binding"/>
    <property type="match status" value="1"/>
</dbReference>
<dbReference type="HAMAP" id="MF_01343_B">
    <property type="entry name" value="Ribosomal_uS15_B"/>
    <property type="match status" value="1"/>
</dbReference>
<dbReference type="InterPro" id="IPR000589">
    <property type="entry name" value="Ribosomal_uS15"/>
</dbReference>
<dbReference type="InterPro" id="IPR005290">
    <property type="entry name" value="Ribosomal_uS15_bac-type"/>
</dbReference>
<dbReference type="InterPro" id="IPR009068">
    <property type="entry name" value="uS15_NS1_RNA-bd_sf"/>
</dbReference>
<dbReference type="NCBIfam" id="TIGR00952">
    <property type="entry name" value="S15_bact"/>
    <property type="match status" value="1"/>
</dbReference>
<dbReference type="PANTHER" id="PTHR23321">
    <property type="entry name" value="RIBOSOMAL PROTEIN S15, BACTERIAL AND ORGANELLAR"/>
    <property type="match status" value="1"/>
</dbReference>
<dbReference type="PANTHER" id="PTHR23321:SF26">
    <property type="entry name" value="SMALL RIBOSOMAL SUBUNIT PROTEIN US15M"/>
    <property type="match status" value="1"/>
</dbReference>
<dbReference type="Pfam" id="PF00312">
    <property type="entry name" value="Ribosomal_S15"/>
    <property type="match status" value="1"/>
</dbReference>
<dbReference type="SMART" id="SM01387">
    <property type="entry name" value="Ribosomal_S15"/>
    <property type="match status" value="1"/>
</dbReference>
<dbReference type="SUPFAM" id="SSF47060">
    <property type="entry name" value="S15/NS1 RNA-binding domain"/>
    <property type="match status" value="1"/>
</dbReference>
<dbReference type="PROSITE" id="PS00362">
    <property type="entry name" value="RIBOSOMAL_S15"/>
    <property type="match status" value="1"/>
</dbReference>
<name>RS15_SHESM</name>
<feature type="chain" id="PRO_1000054872" description="Small ribosomal subunit protein uS15">
    <location>
        <begin position="1"/>
        <end position="89"/>
    </location>
</feature>
<evidence type="ECO:0000255" key="1">
    <source>
        <dbReference type="HAMAP-Rule" id="MF_01343"/>
    </source>
</evidence>
<evidence type="ECO:0000305" key="2"/>
<sequence>MSLSTEAKAKILAEFGRGANDTGSTEVQVALLTAQINHLQDHFKEHIHDHHSRRGLLRMVSARRKLLAYLKRTEAARYNELIQKLGLRR</sequence>
<organism>
    <name type="scientific">Shewanella sp. (strain MR-4)</name>
    <dbReference type="NCBI Taxonomy" id="60480"/>
    <lineage>
        <taxon>Bacteria</taxon>
        <taxon>Pseudomonadati</taxon>
        <taxon>Pseudomonadota</taxon>
        <taxon>Gammaproteobacteria</taxon>
        <taxon>Alteromonadales</taxon>
        <taxon>Shewanellaceae</taxon>
        <taxon>Shewanella</taxon>
    </lineage>
</organism>
<protein>
    <recommendedName>
        <fullName evidence="1">Small ribosomal subunit protein uS15</fullName>
    </recommendedName>
    <alternativeName>
        <fullName evidence="2">30S ribosomal protein S15</fullName>
    </alternativeName>
</protein>
<keyword id="KW-0687">Ribonucleoprotein</keyword>
<keyword id="KW-0689">Ribosomal protein</keyword>
<keyword id="KW-0694">RNA-binding</keyword>
<keyword id="KW-0699">rRNA-binding</keyword>
<proteinExistence type="inferred from homology"/>
<comment type="function">
    <text evidence="1">One of the primary rRNA binding proteins, it binds directly to 16S rRNA where it helps nucleate assembly of the platform of the 30S subunit by binding and bridging several RNA helices of the 16S rRNA.</text>
</comment>
<comment type="function">
    <text evidence="1">Forms an intersubunit bridge (bridge B4) with the 23S rRNA of the 50S subunit in the ribosome.</text>
</comment>
<comment type="subunit">
    <text evidence="1">Part of the 30S ribosomal subunit. Forms a bridge to the 50S subunit in the 70S ribosome, contacting the 23S rRNA.</text>
</comment>
<comment type="similarity">
    <text evidence="1">Belongs to the universal ribosomal protein uS15 family.</text>
</comment>
<accession>Q0HLF8</accession>
<reference key="1">
    <citation type="submission" date="2006-08" db="EMBL/GenBank/DDBJ databases">
        <title>Complete sequence of Shewanella sp. MR-4.</title>
        <authorList>
            <consortium name="US DOE Joint Genome Institute"/>
            <person name="Copeland A."/>
            <person name="Lucas S."/>
            <person name="Lapidus A."/>
            <person name="Barry K."/>
            <person name="Detter J.C."/>
            <person name="Glavina del Rio T."/>
            <person name="Hammon N."/>
            <person name="Israni S."/>
            <person name="Dalin E."/>
            <person name="Tice H."/>
            <person name="Pitluck S."/>
            <person name="Kiss H."/>
            <person name="Brettin T."/>
            <person name="Bruce D."/>
            <person name="Han C."/>
            <person name="Tapia R."/>
            <person name="Gilna P."/>
            <person name="Schmutz J."/>
            <person name="Larimer F."/>
            <person name="Land M."/>
            <person name="Hauser L."/>
            <person name="Kyrpides N."/>
            <person name="Mikhailova N."/>
            <person name="Nealson K."/>
            <person name="Konstantinidis K."/>
            <person name="Klappenbach J."/>
            <person name="Tiedje J."/>
            <person name="Richardson P."/>
        </authorList>
    </citation>
    <scope>NUCLEOTIDE SEQUENCE [LARGE SCALE GENOMIC DNA]</scope>
    <source>
        <strain>MR-4</strain>
    </source>
</reference>
<gene>
    <name evidence="1" type="primary">rpsO</name>
    <name type="ordered locus">Shewmr4_1029</name>
</gene>